<comment type="function">
    <text evidence="1">Part of a membrane-bound complex that couples electron transfer with translocation of ions across the membrane. Required to maintain the reduced state of SoxR.</text>
</comment>
<comment type="cofactor">
    <cofactor evidence="1">
        <name>[4Fe-4S] cluster</name>
        <dbReference type="ChEBI" id="CHEBI:49883"/>
    </cofactor>
    <text evidence="1">Binds 3 [4Fe-4S] clusters.</text>
</comment>
<comment type="subunit">
    <text evidence="1">The complex is composed of six subunits: RsxA, RsxB, RsxC, RsxD, RsxE and RsxG.</text>
</comment>
<comment type="subcellular location">
    <subcellularLocation>
        <location evidence="1">Cell inner membrane</location>
    </subcellularLocation>
</comment>
<comment type="similarity">
    <text evidence="1">Belongs to the 4Fe4S bacterial-type ferredoxin family. RnfB subfamily.</text>
</comment>
<sequence>MNAIWIAVAAVSLLGLAFGAILGYASRRFAVEDDPVVEKIDEILPQSQCGQCGYPGCRPYAETISCNGEKINRCAPGGEAVMLKIAELLNVEPQPLDGEAQELTPARMVAVIDENNCIGCTKCIQACPVDAIVGATRAMHTVMSDLCTGCNLCVDPCPTHCISLQPVAETPDSWKWDLNTIPVRIIPVEHHA</sequence>
<feature type="chain" id="PRO_1000013641" description="Ion-translocating oxidoreductase complex subunit B">
    <location>
        <begin position="1"/>
        <end position="192"/>
    </location>
</feature>
<feature type="domain" description="4Fe-4S" evidence="1">
    <location>
        <begin position="32"/>
        <end position="91"/>
    </location>
</feature>
<feature type="domain" description="4Fe-4S ferredoxin-type 1" evidence="1">
    <location>
        <begin position="108"/>
        <end position="137"/>
    </location>
</feature>
<feature type="domain" description="4Fe-4S ferredoxin-type 2" evidence="1">
    <location>
        <begin position="138"/>
        <end position="167"/>
    </location>
</feature>
<feature type="region of interest" description="Hydrophobic" evidence="1">
    <location>
        <begin position="1"/>
        <end position="26"/>
    </location>
</feature>
<feature type="binding site" evidence="1">
    <location>
        <position position="49"/>
    </location>
    <ligand>
        <name>[4Fe-4S] cluster</name>
        <dbReference type="ChEBI" id="CHEBI:49883"/>
        <label>1</label>
    </ligand>
</feature>
<feature type="binding site" evidence="1">
    <location>
        <position position="52"/>
    </location>
    <ligand>
        <name>[4Fe-4S] cluster</name>
        <dbReference type="ChEBI" id="CHEBI:49883"/>
        <label>1</label>
    </ligand>
</feature>
<feature type="binding site" evidence="1">
    <location>
        <position position="57"/>
    </location>
    <ligand>
        <name>[4Fe-4S] cluster</name>
        <dbReference type="ChEBI" id="CHEBI:49883"/>
        <label>1</label>
    </ligand>
</feature>
<feature type="binding site" evidence="1">
    <location>
        <position position="74"/>
    </location>
    <ligand>
        <name>[4Fe-4S] cluster</name>
        <dbReference type="ChEBI" id="CHEBI:49883"/>
        <label>1</label>
    </ligand>
</feature>
<feature type="binding site" evidence="1">
    <location>
        <position position="117"/>
    </location>
    <ligand>
        <name>[4Fe-4S] cluster</name>
        <dbReference type="ChEBI" id="CHEBI:49883"/>
        <label>2</label>
    </ligand>
</feature>
<feature type="binding site" evidence="1">
    <location>
        <position position="120"/>
    </location>
    <ligand>
        <name>[4Fe-4S] cluster</name>
        <dbReference type="ChEBI" id="CHEBI:49883"/>
        <label>2</label>
    </ligand>
</feature>
<feature type="binding site" evidence="1">
    <location>
        <position position="123"/>
    </location>
    <ligand>
        <name>[4Fe-4S] cluster</name>
        <dbReference type="ChEBI" id="CHEBI:49883"/>
        <label>2</label>
    </ligand>
</feature>
<feature type="binding site" evidence="1">
    <location>
        <position position="127"/>
    </location>
    <ligand>
        <name>[4Fe-4S] cluster</name>
        <dbReference type="ChEBI" id="CHEBI:49883"/>
        <label>3</label>
    </ligand>
</feature>
<feature type="binding site" evidence="1">
    <location>
        <position position="147"/>
    </location>
    <ligand>
        <name>[4Fe-4S] cluster</name>
        <dbReference type="ChEBI" id="CHEBI:49883"/>
        <label>3</label>
    </ligand>
</feature>
<feature type="binding site" evidence="1">
    <location>
        <position position="150"/>
    </location>
    <ligand>
        <name>[4Fe-4S] cluster</name>
        <dbReference type="ChEBI" id="CHEBI:49883"/>
        <label>3</label>
    </ligand>
</feature>
<feature type="binding site" evidence="1">
    <location>
        <position position="153"/>
    </location>
    <ligand>
        <name>[4Fe-4S] cluster</name>
        <dbReference type="ChEBI" id="CHEBI:49883"/>
        <label>3</label>
    </ligand>
</feature>
<feature type="binding site" evidence="1">
    <location>
        <position position="157"/>
    </location>
    <ligand>
        <name>[4Fe-4S] cluster</name>
        <dbReference type="ChEBI" id="CHEBI:49883"/>
        <label>2</label>
    </ligand>
</feature>
<dbReference type="EC" id="7.-.-.-" evidence="1"/>
<dbReference type="EMBL" id="CP000247">
    <property type="protein sequence ID" value="ABG69580.1"/>
    <property type="molecule type" value="Genomic_DNA"/>
</dbReference>
<dbReference type="RefSeq" id="WP_000991823.1">
    <property type="nucleotide sequence ID" value="NC_008253.1"/>
</dbReference>
<dbReference type="KEGG" id="ecp:ECP_1573"/>
<dbReference type="HOGENOM" id="CLU_063448_2_0_6"/>
<dbReference type="Proteomes" id="UP000009182">
    <property type="component" value="Chromosome"/>
</dbReference>
<dbReference type="GO" id="GO:0005886">
    <property type="term" value="C:plasma membrane"/>
    <property type="evidence" value="ECO:0007669"/>
    <property type="project" value="UniProtKB-SubCell"/>
</dbReference>
<dbReference type="GO" id="GO:0051539">
    <property type="term" value="F:4 iron, 4 sulfur cluster binding"/>
    <property type="evidence" value="ECO:0007669"/>
    <property type="project" value="UniProtKB-UniRule"/>
</dbReference>
<dbReference type="GO" id="GO:0009055">
    <property type="term" value="F:electron transfer activity"/>
    <property type="evidence" value="ECO:0007669"/>
    <property type="project" value="InterPro"/>
</dbReference>
<dbReference type="GO" id="GO:0046872">
    <property type="term" value="F:metal ion binding"/>
    <property type="evidence" value="ECO:0007669"/>
    <property type="project" value="UniProtKB-KW"/>
</dbReference>
<dbReference type="GO" id="GO:0022900">
    <property type="term" value="P:electron transport chain"/>
    <property type="evidence" value="ECO:0007669"/>
    <property type="project" value="UniProtKB-UniRule"/>
</dbReference>
<dbReference type="FunFam" id="1.10.15.40:FF:000001">
    <property type="entry name" value="Ion-translocating oxidoreductase complex subunit B"/>
    <property type="match status" value="1"/>
</dbReference>
<dbReference type="Gene3D" id="3.30.70.20">
    <property type="match status" value="1"/>
</dbReference>
<dbReference type="Gene3D" id="1.10.15.40">
    <property type="entry name" value="Electron transport complex subunit B, putative Fe-S cluster"/>
    <property type="match status" value="1"/>
</dbReference>
<dbReference type="HAMAP" id="MF_00463">
    <property type="entry name" value="RsxB_RnfB"/>
    <property type="match status" value="1"/>
</dbReference>
<dbReference type="InterPro" id="IPR007202">
    <property type="entry name" value="4Fe-4S_dom"/>
</dbReference>
<dbReference type="InterPro" id="IPR017896">
    <property type="entry name" value="4Fe4S_Fe-S-bd"/>
</dbReference>
<dbReference type="InterPro" id="IPR017900">
    <property type="entry name" value="4Fe4S_Fe_S_CS"/>
</dbReference>
<dbReference type="InterPro" id="IPR050395">
    <property type="entry name" value="4Fe4S_Ferredoxin_RnfB"/>
</dbReference>
<dbReference type="InterPro" id="IPR010207">
    <property type="entry name" value="Elect_transpt_cplx_RnfB/RsxB"/>
</dbReference>
<dbReference type="InterPro" id="IPR016463">
    <property type="entry name" value="RnfB/RsxB_Proteobac"/>
</dbReference>
<dbReference type="NCBIfam" id="NF003475">
    <property type="entry name" value="PRK05113.1"/>
    <property type="match status" value="1"/>
</dbReference>
<dbReference type="NCBIfam" id="TIGR01944">
    <property type="entry name" value="rnfB"/>
    <property type="match status" value="1"/>
</dbReference>
<dbReference type="PANTHER" id="PTHR43560">
    <property type="entry name" value="ION-TRANSLOCATING OXIDOREDUCTASE COMPLEX SUBUNIT B"/>
    <property type="match status" value="1"/>
</dbReference>
<dbReference type="PANTHER" id="PTHR43560:SF1">
    <property type="entry name" value="ION-TRANSLOCATING OXIDOREDUCTASE COMPLEX SUBUNIT B"/>
    <property type="match status" value="1"/>
</dbReference>
<dbReference type="Pfam" id="PF14697">
    <property type="entry name" value="Fer4_21"/>
    <property type="match status" value="1"/>
</dbReference>
<dbReference type="Pfam" id="PF04060">
    <property type="entry name" value="FeS"/>
    <property type="match status" value="1"/>
</dbReference>
<dbReference type="PIRSF" id="PIRSF005784">
    <property type="entry name" value="Elect_transpt_RnfB"/>
    <property type="match status" value="1"/>
</dbReference>
<dbReference type="SUPFAM" id="SSF54862">
    <property type="entry name" value="4Fe-4S ferredoxins"/>
    <property type="match status" value="1"/>
</dbReference>
<dbReference type="PROSITE" id="PS51656">
    <property type="entry name" value="4FE4S"/>
    <property type="match status" value="1"/>
</dbReference>
<dbReference type="PROSITE" id="PS00198">
    <property type="entry name" value="4FE4S_FER_1"/>
    <property type="match status" value="2"/>
</dbReference>
<dbReference type="PROSITE" id="PS51379">
    <property type="entry name" value="4FE4S_FER_2"/>
    <property type="match status" value="2"/>
</dbReference>
<accession>Q0THJ9</accession>
<proteinExistence type="inferred from homology"/>
<keyword id="KW-0004">4Fe-4S</keyword>
<keyword id="KW-0997">Cell inner membrane</keyword>
<keyword id="KW-1003">Cell membrane</keyword>
<keyword id="KW-0249">Electron transport</keyword>
<keyword id="KW-0408">Iron</keyword>
<keyword id="KW-0411">Iron-sulfur</keyword>
<keyword id="KW-0472">Membrane</keyword>
<keyword id="KW-0479">Metal-binding</keyword>
<keyword id="KW-0677">Repeat</keyword>
<keyword id="KW-1278">Translocase</keyword>
<keyword id="KW-0813">Transport</keyword>
<name>RSXB_ECOL5</name>
<protein>
    <recommendedName>
        <fullName evidence="1">Ion-translocating oxidoreductase complex subunit B</fullName>
        <ecNumber evidence="1">7.-.-.-</ecNumber>
    </recommendedName>
    <alternativeName>
        <fullName evidence="1">Rsx electron transport complex subunit B</fullName>
    </alternativeName>
</protein>
<reference key="1">
    <citation type="journal article" date="2006" name="Mol. Microbiol.">
        <title>Role of pathogenicity island-associated integrases in the genome plasticity of uropathogenic Escherichia coli strain 536.</title>
        <authorList>
            <person name="Hochhut B."/>
            <person name="Wilde C."/>
            <person name="Balling G."/>
            <person name="Middendorf B."/>
            <person name="Dobrindt U."/>
            <person name="Brzuszkiewicz E."/>
            <person name="Gottschalk G."/>
            <person name="Carniel E."/>
            <person name="Hacker J."/>
        </authorList>
    </citation>
    <scope>NUCLEOTIDE SEQUENCE [LARGE SCALE GENOMIC DNA]</scope>
    <source>
        <strain>536 / UPEC</strain>
    </source>
</reference>
<organism>
    <name type="scientific">Escherichia coli O6:K15:H31 (strain 536 / UPEC)</name>
    <dbReference type="NCBI Taxonomy" id="362663"/>
    <lineage>
        <taxon>Bacteria</taxon>
        <taxon>Pseudomonadati</taxon>
        <taxon>Pseudomonadota</taxon>
        <taxon>Gammaproteobacteria</taxon>
        <taxon>Enterobacterales</taxon>
        <taxon>Enterobacteriaceae</taxon>
        <taxon>Escherichia</taxon>
    </lineage>
</organism>
<evidence type="ECO:0000255" key="1">
    <source>
        <dbReference type="HAMAP-Rule" id="MF_00463"/>
    </source>
</evidence>
<gene>
    <name evidence="1" type="primary">rsxB</name>
    <name type="ordered locus">ECP_1573</name>
</gene>